<proteinExistence type="evidence at protein level"/>
<feature type="chain" id="PRO_0000191391" description="Protein O-linked-mannose beta-1,2-N-acetylglucosaminyltransferase 1">
    <location>
        <begin position="1"/>
        <end position="660"/>
    </location>
</feature>
<feature type="topological domain" description="Cytoplasmic" evidence="2">
    <location>
        <begin position="1"/>
        <end position="37"/>
    </location>
</feature>
<feature type="transmembrane region" description="Helical; Signal-anchor for type II membrane protein" evidence="2">
    <location>
        <begin position="38"/>
        <end position="58"/>
    </location>
</feature>
<feature type="topological domain" description="Lumenal" evidence="2">
    <location>
        <begin position="59"/>
        <end position="660"/>
    </location>
</feature>
<feature type="domain" description="GG-type lectin" evidence="3">
    <location>
        <begin position="97"/>
        <end position="258"/>
    </location>
</feature>
<feature type="region of interest" description="Disordered" evidence="4">
    <location>
        <begin position="68"/>
        <end position="93"/>
    </location>
</feature>
<feature type="region of interest" description="Catalytic" evidence="1">
    <location>
        <begin position="300"/>
        <end position="646"/>
    </location>
</feature>
<feature type="region of interest" description="Interaction with O-glycosylated substrate glycoprotein" evidence="1">
    <location>
        <begin position="473"/>
        <end position="481"/>
    </location>
</feature>
<feature type="region of interest" description="Interaction with O-glycosylated substrate glycoprotein" evidence="1">
    <location>
        <begin position="506"/>
        <end position="512"/>
    </location>
</feature>
<feature type="region of interest" description="Interaction with O-glycosylated substrate glycoprotein" evidence="1">
    <location>
        <begin position="600"/>
        <end position="605"/>
    </location>
</feature>
<feature type="region of interest" description="Disordered" evidence="4">
    <location>
        <begin position="634"/>
        <end position="660"/>
    </location>
</feature>
<feature type="compositionally biased region" description="Acidic residues" evidence="4">
    <location>
        <begin position="68"/>
        <end position="80"/>
    </location>
</feature>
<feature type="binding site" evidence="1">
    <location>
        <position position="129"/>
    </location>
    <ligand>
        <name>a carbohydrate</name>
        <dbReference type="ChEBI" id="CHEBI:16646"/>
    </ligand>
</feature>
<feature type="binding site" evidence="1">
    <location>
        <position position="179"/>
    </location>
    <ligand>
        <name>a carbohydrate</name>
        <dbReference type="ChEBI" id="CHEBI:16646"/>
    </ligand>
</feature>
<feature type="binding site" evidence="1">
    <location>
        <position position="207"/>
    </location>
    <ligand>
        <name>a carbohydrate</name>
        <dbReference type="ChEBI" id="CHEBI:16646"/>
    </ligand>
</feature>
<feature type="binding site" evidence="1">
    <location>
        <begin position="307"/>
        <end position="311"/>
    </location>
    <ligand>
        <name>UDP-N-acetyl-alpha-D-glucosamine</name>
        <dbReference type="ChEBI" id="CHEBI:57705"/>
    </ligand>
</feature>
<feature type="binding site" evidence="1">
    <location>
        <position position="338"/>
    </location>
    <ligand>
        <name>UDP-N-acetyl-alpha-D-glucosamine</name>
        <dbReference type="ChEBI" id="CHEBI:57705"/>
    </ligand>
</feature>
<feature type="binding site" evidence="1">
    <location>
        <position position="371"/>
    </location>
    <ligand>
        <name>UDP-N-acetyl-alpha-D-glucosamine</name>
        <dbReference type="ChEBI" id="CHEBI:57705"/>
    </ligand>
</feature>
<feature type="binding site" evidence="1">
    <location>
        <begin position="394"/>
        <end position="395"/>
    </location>
    <ligand>
        <name>UDP-N-acetyl-alpha-D-glucosamine</name>
        <dbReference type="ChEBI" id="CHEBI:57705"/>
    </ligand>
</feature>
<feature type="binding site" evidence="1">
    <location>
        <position position="395"/>
    </location>
    <ligand>
        <name>Mn(2+)</name>
        <dbReference type="ChEBI" id="CHEBI:29035"/>
    </ligand>
</feature>
<feature type="binding site" evidence="1">
    <location>
        <position position="500"/>
    </location>
    <ligand>
        <name>Mn(2+)</name>
        <dbReference type="ChEBI" id="CHEBI:29035"/>
    </ligand>
</feature>
<feature type="binding site" evidence="1">
    <location>
        <begin position="506"/>
        <end position="507"/>
    </location>
    <ligand>
        <name>UDP-N-acetyl-alpha-D-glucosamine</name>
        <dbReference type="ChEBI" id="CHEBI:57705"/>
    </ligand>
</feature>
<feature type="modified residue" description="Phosphoserine" evidence="1">
    <location>
        <position position="7"/>
    </location>
</feature>
<feature type="disulfide bond" evidence="1">
    <location>
        <begin position="254"/>
        <end position="281"/>
    </location>
</feature>
<feature type="disulfide bond" evidence="1">
    <location>
        <begin position="269"/>
        <end position="279"/>
    </location>
</feature>
<feature type="disulfide bond" evidence="1">
    <location>
        <begin position="421"/>
        <end position="490"/>
    </location>
</feature>
<feature type="disulfide bond" evidence="1">
    <location>
        <begin position="562"/>
        <end position="596"/>
    </location>
</feature>
<feature type="splice variant" id="VSP_014972" description="In isoform 2." evidence="7">
    <location>
        <begin position="1"/>
        <end position="22"/>
    </location>
</feature>
<feature type="splice variant" id="VSP_014973" description="In isoform 2." evidence="7">
    <original>LTWKYKLTNQRALRRFCQ</original>
    <variation>MEGTKEVKDSNGKIQDHG</variation>
    <location>
        <begin position="23"/>
        <end position="40"/>
    </location>
</feature>
<feature type="splice variant" id="VSP_014974" description="In isoform 3." evidence="7">
    <location>
        <begin position="218"/>
        <end position="250"/>
    </location>
</feature>
<feature type="sequence conflict" description="In Ref. 2; BAB29863." evidence="8" ref="2">
    <original>A</original>
    <variation>S</variation>
    <location>
        <position position="424"/>
    </location>
</feature>
<feature type="sequence conflict" description="In Ref. 2; BAB22251." evidence="8" ref="2">
    <original>H</original>
    <variation>P</variation>
    <location>
        <position position="557"/>
    </location>
</feature>
<dbReference type="EC" id="2.4.1.-" evidence="1"/>
<dbReference type="EMBL" id="AB053220">
    <property type="protein sequence ID" value="BAC55021.1"/>
    <property type="molecule type" value="mRNA"/>
</dbReference>
<dbReference type="EMBL" id="AB053221">
    <property type="protein sequence ID" value="BAC55022.1"/>
    <property type="molecule type" value="Genomic_DNA"/>
</dbReference>
<dbReference type="EMBL" id="AK002638">
    <property type="protein sequence ID" value="BAB22251.1"/>
    <property type="molecule type" value="mRNA"/>
</dbReference>
<dbReference type="EMBL" id="AK019640">
    <property type="protein sequence ID" value="BAB31822.1"/>
    <property type="molecule type" value="mRNA"/>
</dbReference>
<dbReference type="EMBL" id="AK015478">
    <property type="protein sequence ID" value="BAB29863.1"/>
    <property type="molecule type" value="mRNA"/>
</dbReference>
<dbReference type="EMBL" id="AL611947">
    <property type="status" value="NOT_ANNOTATED_CDS"/>
    <property type="molecule type" value="Genomic_DNA"/>
</dbReference>
<dbReference type="EMBL" id="BC011201">
    <property type="protein sequence ID" value="AAH11201.1"/>
    <property type="molecule type" value="mRNA"/>
</dbReference>
<dbReference type="CCDS" id="CCDS18506.1">
    <molecule id="Q91X88-1"/>
</dbReference>
<dbReference type="CCDS" id="CCDS18507.1">
    <molecule id="Q91X88-3"/>
</dbReference>
<dbReference type="CCDS" id="CCDS71450.1">
    <molecule id="Q91X88-2"/>
</dbReference>
<dbReference type="RefSeq" id="NP_001277587.1">
    <molecule id="Q91X88-2"/>
    <property type="nucleotide sequence ID" value="NM_001290658.1"/>
</dbReference>
<dbReference type="RefSeq" id="NP_080927.1">
    <molecule id="Q91X88-1"/>
    <property type="nucleotide sequence ID" value="NM_026651.2"/>
</dbReference>
<dbReference type="RefSeq" id="NP_084062.2">
    <molecule id="Q91X88-3"/>
    <property type="nucleotide sequence ID" value="NM_029786.2"/>
</dbReference>
<dbReference type="SMR" id="Q91X88"/>
<dbReference type="BioGRID" id="212776">
    <property type="interactions" value="5"/>
</dbReference>
<dbReference type="FunCoup" id="Q91X88">
    <property type="interactions" value="448"/>
</dbReference>
<dbReference type="STRING" id="10090.ENSMUSP00000112751"/>
<dbReference type="CAZy" id="GT13">
    <property type="family name" value="Glycosyltransferase Family 13"/>
</dbReference>
<dbReference type="GlyGen" id="Q91X88">
    <property type="glycosylation" value="1 site"/>
</dbReference>
<dbReference type="iPTMnet" id="Q91X88"/>
<dbReference type="PhosphoSitePlus" id="Q91X88"/>
<dbReference type="SwissPalm" id="Q91X88"/>
<dbReference type="jPOST" id="Q91X88"/>
<dbReference type="PaxDb" id="10090-ENSMUSP00000102107"/>
<dbReference type="PeptideAtlas" id="Q91X88"/>
<dbReference type="ProteomicsDB" id="289699">
    <molecule id="Q91X88-1"/>
</dbReference>
<dbReference type="ProteomicsDB" id="289700">
    <molecule id="Q91X88-2"/>
</dbReference>
<dbReference type="ProteomicsDB" id="289701">
    <molecule id="Q91X88-3"/>
</dbReference>
<dbReference type="Pumba" id="Q91X88"/>
<dbReference type="Antibodypedia" id="32757">
    <property type="antibodies" value="105 antibodies from 24 providers"/>
</dbReference>
<dbReference type="DNASU" id="68273"/>
<dbReference type="Ensembl" id="ENSMUST00000106494.3">
    <molecule id="Q91X88-2"/>
    <property type="protein sequence ID" value="ENSMUSP00000102103.3"/>
    <property type="gene ID" value="ENSMUSG00000028700.15"/>
</dbReference>
<dbReference type="Ensembl" id="ENSMUST00000106496.8">
    <molecule id="Q91X88-3"/>
    <property type="protein sequence ID" value="ENSMUSP00000102105.2"/>
    <property type="gene ID" value="ENSMUSG00000028700.15"/>
</dbReference>
<dbReference type="Ensembl" id="ENSMUST00000106498.8">
    <molecule id="Q91X88-1"/>
    <property type="protein sequence ID" value="ENSMUSP00000102107.2"/>
    <property type="gene ID" value="ENSMUSG00000028700.15"/>
</dbReference>
<dbReference type="Ensembl" id="ENSMUST00000120083.8">
    <molecule id="Q91X88-1"/>
    <property type="protein sequence ID" value="ENSMUSP00000112751.2"/>
    <property type="gene ID" value="ENSMUSG00000028700.15"/>
</dbReference>
<dbReference type="Ensembl" id="ENSMUST00000121052.8">
    <molecule id="Q91X88-1"/>
    <property type="protein sequence ID" value="ENSMUSP00000112911.2"/>
    <property type="gene ID" value="ENSMUSG00000028700.15"/>
</dbReference>
<dbReference type="GeneID" id="68273"/>
<dbReference type="KEGG" id="mmu:68273"/>
<dbReference type="UCSC" id="uc008ugh.2">
    <molecule id="Q91X88-1"/>
    <property type="organism name" value="mouse"/>
</dbReference>
<dbReference type="UCSC" id="uc008ugi.2">
    <molecule id="Q91X88-3"/>
    <property type="organism name" value="mouse"/>
</dbReference>
<dbReference type="UCSC" id="uc008ugj.1">
    <molecule id="Q91X88-2"/>
    <property type="organism name" value="mouse"/>
</dbReference>
<dbReference type="AGR" id="MGI:1915523"/>
<dbReference type="CTD" id="55624"/>
<dbReference type="MGI" id="MGI:1915523">
    <property type="gene designation" value="Pomgnt1"/>
</dbReference>
<dbReference type="VEuPathDB" id="HostDB:ENSMUSG00000028700"/>
<dbReference type="eggNOG" id="ENOG502QSG3">
    <property type="taxonomic scope" value="Eukaryota"/>
</dbReference>
<dbReference type="GeneTree" id="ENSGT00530000063632"/>
<dbReference type="HOGENOM" id="CLU_024847_0_0_1"/>
<dbReference type="InParanoid" id="Q91X88"/>
<dbReference type="OMA" id="NYETEIH"/>
<dbReference type="OrthoDB" id="440755at2759"/>
<dbReference type="PhylomeDB" id="Q91X88"/>
<dbReference type="TreeFam" id="TF320555"/>
<dbReference type="Reactome" id="R-MMU-5173105">
    <property type="pathway name" value="O-linked glycosylation"/>
</dbReference>
<dbReference type="UniPathway" id="UPA00378"/>
<dbReference type="BioGRID-ORCS" id="68273">
    <property type="hits" value="2 hits in 76 CRISPR screens"/>
</dbReference>
<dbReference type="ChiTaRS" id="Pomgnt1">
    <property type="organism name" value="mouse"/>
</dbReference>
<dbReference type="PRO" id="PR:Q91X88"/>
<dbReference type="Proteomes" id="UP000000589">
    <property type="component" value="Chromosome 4"/>
</dbReference>
<dbReference type="RNAct" id="Q91X88">
    <property type="molecule type" value="protein"/>
</dbReference>
<dbReference type="Bgee" id="ENSMUSG00000028700">
    <property type="expression patterns" value="Expressed in lacrimal gland and 271 other cell types or tissues"/>
</dbReference>
<dbReference type="GO" id="GO:0000139">
    <property type="term" value="C:Golgi membrane"/>
    <property type="evidence" value="ECO:0000250"/>
    <property type="project" value="UniProtKB"/>
</dbReference>
<dbReference type="GO" id="GO:0016020">
    <property type="term" value="C:membrane"/>
    <property type="evidence" value="ECO:0000250"/>
    <property type="project" value="UniProtKB"/>
</dbReference>
<dbReference type="GO" id="GO:0008375">
    <property type="term" value="F:acetylglucosaminyltransferase activity"/>
    <property type="evidence" value="ECO:0000250"/>
    <property type="project" value="UniProtKB"/>
</dbReference>
<dbReference type="GO" id="GO:0047223">
    <property type="term" value="F:beta-1,3-galactosyl-O-glycosyl-glycoprotein beta-1,3-N-acetylglucosaminyltransferase activity"/>
    <property type="evidence" value="ECO:0000266"/>
    <property type="project" value="MGI"/>
</dbReference>
<dbReference type="GO" id="GO:0030246">
    <property type="term" value="F:carbohydrate binding"/>
    <property type="evidence" value="ECO:0007669"/>
    <property type="project" value="UniProtKB-KW"/>
</dbReference>
<dbReference type="GO" id="GO:0030145">
    <property type="term" value="F:manganese ion binding"/>
    <property type="evidence" value="ECO:0000250"/>
    <property type="project" value="UniProtKB"/>
</dbReference>
<dbReference type="GO" id="GO:0071711">
    <property type="term" value="P:basement membrane organization"/>
    <property type="evidence" value="ECO:0000315"/>
    <property type="project" value="MGI"/>
</dbReference>
<dbReference type="GO" id="GO:0007420">
    <property type="term" value="P:brain development"/>
    <property type="evidence" value="ECO:0000315"/>
    <property type="project" value="MGI"/>
</dbReference>
<dbReference type="GO" id="GO:0021542">
    <property type="term" value="P:dentate gyrus development"/>
    <property type="evidence" value="ECO:0000315"/>
    <property type="project" value="MGI"/>
</dbReference>
<dbReference type="GO" id="GO:0010467">
    <property type="term" value="P:gene expression"/>
    <property type="evidence" value="ECO:0000315"/>
    <property type="project" value="MGI"/>
</dbReference>
<dbReference type="GO" id="GO:0051674">
    <property type="term" value="P:localization of cell"/>
    <property type="evidence" value="ECO:0000315"/>
    <property type="project" value="MGI"/>
</dbReference>
<dbReference type="GO" id="GO:0042552">
    <property type="term" value="P:myelination"/>
    <property type="evidence" value="ECO:0000315"/>
    <property type="project" value="MGI"/>
</dbReference>
<dbReference type="GO" id="GO:0016266">
    <property type="term" value="P:O-glycan processing"/>
    <property type="evidence" value="ECO:0000250"/>
    <property type="project" value="UniProtKB"/>
</dbReference>
<dbReference type="GO" id="GO:0006486">
    <property type="term" value="P:protein glycosylation"/>
    <property type="evidence" value="ECO:0000315"/>
    <property type="project" value="MGI"/>
</dbReference>
<dbReference type="GO" id="GO:0036211">
    <property type="term" value="P:protein modification process"/>
    <property type="evidence" value="ECO:0000315"/>
    <property type="project" value="MGI"/>
</dbReference>
<dbReference type="GO" id="GO:0006493">
    <property type="term" value="P:protein O-linked glycosylation"/>
    <property type="evidence" value="ECO:0000315"/>
    <property type="project" value="MGI"/>
</dbReference>
<dbReference type="GO" id="GO:0035269">
    <property type="term" value="P:protein O-linked mannosylation"/>
    <property type="evidence" value="ECO:0000315"/>
    <property type="project" value="MGI"/>
</dbReference>
<dbReference type="GO" id="GO:0150103">
    <property type="term" value="P:reactive gliosis"/>
    <property type="evidence" value="ECO:0000315"/>
    <property type="project" value="MGI"/>
</dbReference>
<dbReference type="GO" id="GO:0007605">
    <property type="term" value="P:sensory perception of sound"/>
    <property type="evidence" value="ECO:0000315"/>
    <property type="project" value="MGI"/>
</dbReference>
<dbReference type="CDD" id="cd02514">
    <property type="entry name" value="GT13_GLCNAC-TI"/>
    <property type="match status" value="1"/>
</dbReference>
<dbReference type="CDD" id="cd13937">
    <property type="entry name" value="PANDER_GnT-1_2_like"/>
    <property type="match status" value="1"/>
</dbReference>
<dbReference type="FunFam" id="3.90.550.10:FF:000038">
    <property type="entry name" value="protein O-linked-mannose beta-1,2-N-acetylglucosaminyltransferase 1 isoform X1"/>
    <property type="match status" value="1"/>
</dbReference>
<dbReference type="Gene3D" id="3.90.550.10">
    <property type="entry name" value="Spore Coat Polysaccharide Biosynthesis Protein SpsA, Chain A"/>
    <property type="match status" value="1"/>
</dbReference>
<dbReference type="InterPro" id="IPR004139">
    <property type="entry name" value="Glyco_trans_13"/>
</dbReference>
<dbReference type="InterPro" id="IPR039477">
    <property type="entry name" value="ILEI/PANDER_dom"/>
</dbReference>
<dbReference type="InterPro" id="IPR029044">
    <property type="entry name" value="Nucleotide-diphossugar_trans"/>
</dbReference>
<dbReference type="InterPro" id="IPR052463">
    <property type="entry name" value="O-linked_mannose_GnT"/>
</dbReference>
<dbReference type="InterPro" id="IPR039474">
    <property type="entry name" value="POMGNT1_PANDER-like"/>
</dbReference>
<dbReference type="PANTHER" id="PTHR46396">
    <property type="entry name" value="PROTEIN O-LINKED-MANNOSE BETA-1,2-N-ACETYLGLUCOSAMINYLTRANSFERASE 1"/>
    <property type="match status" value="1"/>
</dbReference>
<dbReference type="PANTHER" id="PTHR46396:SF1">
    <property type="entry name" value="PROTEIN O-LINKED-MANNOSE BETA-1,2-N-ACETYLGLUCOSAMINYLTRANSFERASE 1"/>
    <property type="match status" value="1"/>
</dbReference>
<dbReference type="Pfam" id="PF03071">
    <property type="entry name" value="GNT-I"/>
    <property type="match status" value="1"/>
</dbReference>
<dbReference type="Pfam" id="PF15711">
    <property type="entry name" value="ILEI"/>
    <property type="match status" value="1"/>
</dbReference>
<dbReference type="SUPFAM" id="SSF53448">
    <property type="entry name" value="Nucleotide-diphospho-sugar transferases"/>
    <property type="match status" value="1"/>
</dbReference>
<dbReference type="PROSITE" id="PS52031">
    <property type="entry name" value="GG_LECTIN"/>
    <property type="match status" value="1"/>
</dbReference>
<evidence type="ECO:0000250" key="1">
    <source>
        <dbReference type="UniProtKB" id="Q8WZA1"/>
    </source>
</evidence>
<evidence type="ECO:0000255" key="2"/>
<evidence type="ECO:0000255" key="3">
    <source>
        <dbReference type="PROSITE-ProRule" id="PRU01375"/>
    </source>
</evidence>
<evidence type="ECO:0000256" key="4">
    <source>
        <dbReference type="SAM" id="MobiDB-lite"/>
    </source>
</evidence>
<evidence type="ECO:0000269" key="5">
    <source>
    </source>
</evidence>
<evidence type="ECO:0000269" key="6">
    <source>
    </source>
</evidence>
<evidence type="ECO:0000303" key="7">
    <source>
    </source>
</evidence>
<evidence type="ECO:0000305" key="8"/>
<keyword id="KW-0025">Alternative splicing</keyword>
<keyword id="KW-1015">Disulfide bond</keyword>
<keyword id="KW-0328">Glycosyltransferase</keyword>
<keyword id="KW-0333">Golgi apparatus</keyword>
<keyword id="KW-0430">Lectin</keyword>
<keyword id="KW-0464">Manganese</keyword>
<keyword id="KW-0472">Membrane</keyword>
<keyword id="KW-0479">Metal-binding</keyword>
<keyword id="KW-0597">Phosphoprotein</keyword>
<keyword id="KW-1185">Reference proteome</keyword>
<keyword id="KW-0735">Signal-anchor</keyword>
<keyword id="KW-0808">Transferase</keyword>
<keyword id="KW-0812">Transmembrane</keyword>
<keyword id="KW-1133">Transmembrane helix</keyword>
<sequence>MDDWKPSPLIKPFGARKKRSWYLTWKYKLTNQRALRRFCQTGAVLFLLVTVIVNIKLILDTRRAISEANEDPEPEQDYDEALGRLESPRRRGSSPRRVLDVEVYSSRSKVYVAVDGTTVLEDEAREQGRGIHVIVLNQATGHVMAKRVFDTYSPHEDEAMVLFLNMVAPGRVLICTVKDEGSFHLKDTAKALLRSLGSQAGPALGWRDTWAFVGRKGGPVLGEKHSKSPALSSWGDPVLLKTDVPLSSAEEAECHWADTELNRRRRRFCSKVEGYGSVCSCKDPTPIEFSPDPLPDNKVLNVPVAVIAGNRPNYLYRMLRSLLSAQGVSPQMITVFIDGYYEEPMDVVALFGLRGIQHTPISIKNARVSQHYKASLTATFNLFPEAKFAVVLEEDLDIAVDFFSFLSQSIHLLEEDDSLYCISAWNDQGYEHTAEDPALLYRVETMPGLGWVLRKSLYKEELEPKWPTPEKLWDWDMWMRMPEQRRGRECIIPDVSRSYHFGIVGLNMNGYFHEAYFKKHKFNTVPGVQLRNVDSLKKEAYEVEIHRLLSEAEVLDHSKDPCEDSFLPDTEGHTYVAFIRMETDDDFATWTQLAKCLHIWDLDVRGNHRGLWRLFRKKNHFLVVGVPASPYSVKKPPSVTPIFLEPPPKEEGAPGAAEQT</sequence>
<reference key="1">
    <citation type="submission" date="2001-01" db="EMBL/GenBank/DDBJ databases">
        <authorList>
            <person name="Minowa M.T."/>
            <person name="Yoshida A."/>
            <person name="Endo T."/>
            <person name="Takeuchi M."/>
        </authorList>
    </citation>
    <scope>NUCLEOTIDE SEQUENCE [GENOMIC DNA / MRNA] (ISOFORM 1)</scope>
    <source>
        <strain>129/SvJ</strain>
    </source>
</reference>
<reference key="2">
    <citation type="journal article" date="2005" name="Science">
        <title>The transcriptional landscape of the mammalian genome.</title>
        <authorList>
            <person name="Carninci P."/>
            <person name="Kasukawa T."/>
            <person name="Katayama S."/>
            <person name="Gough J."/>
            <person name="Frith M.C."/>
            <person name="Maeda N."/>
            <person name="Oyama R."/>
            <person name="Ravasi T."/>
            <person name="Lenhard B."/>
            <person name="Wells C."/>
            <person name="Kodzius R."/>
            <person name="Shimokawa K."/>
            <person name="Bajic V.B."/>
            <person name="Brenner S.E."/>
            <person name="Batalov S."/>
            <person name="Forrest A.R."/>
            <person name="Zavolan M."/>
            <person name="Davis M.J."/>
            <person name="Wilming L.G."/>
            <person name="Aidinis V."/>
            <person name="Allen J.E."/>
            <person name="Ambesi-Impiombato A."/>
            <person name="Apweiler R."/>
            <person name="Aturaliya R.N."/>
            <person name="Bailey T.L."/>
            <person name="Bansal M."/>
            <person name="Baxter L."/>
            <person name="Beisel K.W."/>
            <person name="Bersano T."/>
            <person name="Bono H."/>
            <person name="Chalk A.M."/>
            <person name="Chiu K.P."/>
            <person name="Choudhary V."/>
            <person name="Christoffels A."/>
            <person name="Clutterbuck D.R."/>
            <person name="Crowe M.L."/>
            <person name="Dalla E."/>
            <person name="Dalrymple B.P."/>
            <person name="de Bono B."/>
            <person name="Della Gatta G."/>
            <person name="di Bernardo D."/>
            <person name="Down T."/>
            <person name="Engstrom P."/>
            <person name="Fagiolini M."/>
            <person name="Faulkner G."/>
            <person name="Fletcher C.F."/>
            <person name="Fukushima T."/>
            <person name="Furuno M."/>
            <person name="Futaki S."/>
            <person name="Gariboldi M."/>
            <person name="Georgii-Hemming P."/>
            <person name="Gingeras T.R."/>
            <person name="Gojobori T."/>
            <person name="Green R.E."/>
            <person name="Gustincich S."/>
            <person name="Harbers M."/>
            <person name="Hayashi Y."/>
            <person name="Hensch T.K."/>
            <person name="Hirokawa N."/>
            <person name="Hill D."/>
            <person name="Huminiecki L."/>
            <person name="Iacono M."/>
            <person name="Ikeo K."/>
            <person name="Iwama A."/>
            <person name="Ishikawa T."/>
            <person name="Jakt M."/>
            <person name="Kanapin A."/>
            <person name="Katoh M."/>
            <person name="Kawasawa Y."/>
            <person name="Kelso J."/>
            <person name="Kitamura H."/>
            <person name="Kitano H."/>
            <person name="Kollias G."/>
            <person name="Krishnan S.P."/>
            <person name="Kruger A."/>
            <person name="Kummerfeld S.K."/>
            <person name="Kurochkin I.V."/>
            <person name="Lareau L.F."/>
            <person name="Lazarevic D."/>
            <person name="Lipovich L."/>
            <person name="Liu J."/>
            <person name="Liuni S."/>
            <person name="McWilliam S."/>
            <person name="Madan Babu M."/>
            <person name="Madera M."/>
            <person name="Marchionni L."/>
            <person name="Matsuda H."/>
            <person name="Matsuzawa S."/>
            <person name="Miki H."/>
            <person name="Mignone F."/>
            <person name="Miyake S."/>
            <person name="Morris K."/>
            <person name="Mottagui-Tabar S."/>
            <person name="Mulder N."/>
            <person name="Nakano N."/>
            <person name="Nakauchi H."/>
            <person name="Ng P."/>
            <person name="Nilsson R."/>
            <person name="Nishiguchi S."/>
            <person name="Nishikawa S."/>
            <person name="Nori F."/>
            <person name="Ohara O."/>
            <person name="Okazaki Y."/>
            <person name="Orlando V."/>
            <person name="Pang K.C."/>
            <person name="Pavan W.J."/>
            <person name="Pavesi G."/>
            <person name="Pesole G."/>
            <person name="Petrovsky N."/>
            <person name="Piazza S."/>
            <person name="Reed J."/>
            <person name="Reid J.F."/>
            <person name="Ring B.Z."/>
            <person name="Ringwald M."/>
            <person name="Rost B."/>
            <person name="Ruan Y."/>
            <person name="Salzberg S.L."/>
            <person name="Sandelin A."/>
            <person name="Schneider C."/>
            <person name="Schoenbach C."/>
            <person name="Sekiguchi K."/>
            <person name="Semple C.A."/>
            <person name="Seno S."/>
            <person name="Sessa L."/>
            <person name="Sheng Y."/>
            <person name="Shibata Y."/>
            <person name="Shimada H."/>
            <person name="Shimada K."/>
            <person name="Silva D."/>
            <person name="Sinclair B."/>
            <person name="Sperling S."/>
            <person name="Stupka E."/>
            <person name="Sugiura K."/>
            <person name="Sultana R."/>
            <person name="Takenaka Y."/>
            <person name="Taki K."/>
            <person name="Tammoja K."/>
            <person name="Tan S.L."/>
            <person name="Tang S."/>
            <person name="Taylor M.S."/>
            <person name="Tegner J."/>
            <person name="Teichmann S.A."/>
            <person name="Ueda H.R."/>
            <person name="van Nimwegen E."/>
            <person name="Verardo R."/>
            <person name="Wei C.L."/>
            <person name="Yagi K."/>
            <person name="Yamanishi H."/>
            <person name="Zabarovsky E."/>
            <person name="Zhu S."/>
            <person name="Zimmer A."/>
            <person name="Hide W."/>
            <person name="Bult C."/>
            <person name="Grimmond S.M."/>
            <person name="Teasdale R.D."/>
            <person name="Liu E.T."/>
            <person name="Brusic V."/>
            <person name="Quackenbush J."/>
            <person name="Wahlestedt C."/>
            <person name="Mattick J.S."/>
            <person name="Hume D.A."/>
            <person name="Kai C."/>
            <person name="Sasaki D."/>
            <person name="Tomaru Y."/>
            <person name="Fukuda S."/>
            <person name="Kanamori-Katayama M."/>
            <person name="Suzuki M."/>
            <person name="Aoki J."/>
            <person name="Arakawa T."/>
            <person name="Iida J."/>
            <person name="Imamura K."/>
            <person name="Itoh M."/>
            <person name="Kato T."/>
            <person name="Kawaji H."/>
            <person name="Kawagashira N."/>
            <person name="Kawashima T."/>
            <person name="Kojima M."/>
            <person name="Kondo S."/>
            <person name="Konno H."/>
            <person name="Nakano K."/>
            <person name="Ninomiya N."/>
            <person name="Nishio T."/>
            <person name="Okada M."/>
            <person name="Plessy C."/>
            <person name="Shibata K."/>
            <person name="Shiraki T."/>
            <person name="Suzuki S."/>
            <person name="Tagami M."/>
            <person name="Waki K."/>
            <person name="Watahiki A."/>
            <person name="Okamura-Oho Y."/>
            <person name="Suzuki H."/>
            <person name="Kawai J."/>
            <person name="Hayashizaki Y."/>
        </authorList>
    </citation>
    <scope>NUCLEOTIDE SEQUENCE [LARGE SCALE MRNA] (ISOFORMS 2 AND 3)</scope>
    <source>
        <strain>C57BL/6J</strain>
        <tissue>Kidney</tissue>
        <tissue>Testis</tissue>
    </source>
</reference>
<reference key="3">
    <citation type="journal article" date="2009" name="PLoS Biol.">
        <title>Lineage-specific biology revealed by a finished genome assembly of the mouse.</title>
        <authorList>
            <person name="Church D.M."/>
            <person name="Goodstadt L."/>
            <person name="Hillier L.W."/>
            <person name="Zody M.C."/>
            <person name="Goldstein S."/>
            <person name="She X."/>
            <person name="Bult C.J."/>
            <person name="Agarwala R."/>
            <person name="Cherry J.L."/>
            <person name="DiCuccio M."/>
            <person name="Hlavina W."/>
            <person name="Kapustin Y."/>
            <person name="Meric P."/>
            <person name="Maglott D."/>
            <person name="Birtle Z."/>
            <person name="Marques A.C."/>
            <person name="Graves T."/>
            <person name="Zhou S."/>
            <person name="Teague B."/>
            <person name="Potamousis K."/>
            <person name="Churas C."/>
            <person name="Place M."/>
            <person name="Herschleb J."/>
            <person name="Runnheim R."/>
            <person name="Forrest D."/>
            <person name="Amos-Landgraf J."/>
            <person name="Schwartz D.C."/>
            <person name="Cheng Z."/>
            <person name="Lindblad-Toh K."/>
            <person name="Eichler E.E."/>
            <person name="Ponting C.P."/>
        </authorList>
    </citation>
    <scope>NUCLEOTIDE SEQUENCE [LARGE SCALE GENOMIC DNA]</scope>
    <source>
        <strain>C57BL/6J</strain>
    </source>
</reference>
<reference key="4">
    <citation type="journal article" date="2004" name="Genome Res.">
        <title>The status, quality, and expansion of the NIH full-length cDNA project: the Mammalian Gene Collection (MGC).</title>
        <authorList>
            <consortium name="The MGC Project Team"/>
        </authorList>
    </citation>
    <scope>NUCLEOTIDE SEQUENCE [LARGE SCALE MRNA] (ISOFORM 1)</scope>
    <source>
        <strain>FVB/N</strain>
        <tissue>Salivary gland</tissue>
    </source>
</reference>
<reference key="5">
    <citation type="journal article" date="2003" name="Brain Res. Mol. Brain Res.">
        <title>Expression of dystroglycan, fukutin and POMGnT1 during mouse cerebellar development.</title>
        <authorList>
            <person name="Henion T.R."/>
            <person name="Qu Q."/>
            <person name="Smith F.I."/>
        </authorList>
    </citation>
    <scope>DEVELOPMENTAL STAGE</scope>
</reference>
<reference key="6">
    <citation type="journal article" date="2016" name="Hum. Mol. Genet.">
        <title>Mutations in POMGNT1 cause non-syndromic retinitis pigmentosa.</title>
        <authorList>
            <person name="Xu M."/>
            <person name="Yamada T."/>
            <person name="Sun Z."/>
            <person name="Eblimit A."/>
            <person name="Lopez I."/>
            <person name="Wang F."/>
            <person name="Manya H."/>
            <person name="Xu S."/>
            <person name="Zhao L."/>
            <person name="Li Y."/>
            <person name="Kimchi A."/>
            <person name="Sharon D."/>
            <person name="Sui R."/>
            <person name="Endo T."/>
            <person name="Koenekoop R.K."/>
            <person name="Chen R."/>
        </authorList>
    </citation>
    <scope>TISSUE SPECIFICITY</scope>
</reference>
<protein>
    <recommendedName>
        <fullName>Protein O-linked-mannose beta-1,2-N-acetylglucosaminyltransferase 1</fullName>
        <shortName>POMGnT1</shortName>
        <ecNumber evidence="1">2.4.1.-</ecNumber>
    </recommendedName>
</protein>
<comment type="function">
    <text evidence="1">Participates in O-mannosyl glycosylation by catalyzing the addition of N-acetylglucosamine to O-linked mannose on glycoproteins. Catalyzes the synthesis of the GlcNAc(beta1-2)Man(alpha1-)O-Ser/Thr moiety on alpha-dystroglycan and other O-mannosylated proteins, providing the necessary basis for the addition of further carbohydrate moieties. Is specific for alpha linked terminal mannose.</text>
</comment>
<comment type="catalytic activity">
    <reaction evidence="1">
        <text>3-O-(alpha-D-mannosyl)-L-threonyl-[protein] + UDP-N-acetyl-alpha-D-glucosamine = 3-O-(N-acetyl-beta-D-glucosaminyl-(1-&gt;2)-alpha-D-mannosyl)-L-threonyl-[protein] + UDP + H(+)</text>
        <dbReference type="Rhea" id="RHEA:54128"/>
        <dbReference type="Rhea" id="RHEA-COMP:13547"/>
        <dbReference type="Rhea" id="RHEA-COMP:13802"/>
        <dbReference type="ChEBI" id="CHEBI:15378"/>
        <dbReference type="ChEBI" id="CHEBI:57705"/>
        <dbReference type="ChEBI" id="CHEBI:58223"/>
        <dbReference type="ChEBI" id="CHEBI:137323"/>
        <dbReference type="ChEBI" id="CHEBI:138067"/>
    </reaction>
</comment>
<comment type="cofactor">
    <cofactor evidence="1">
        <name>Mn(2+)</name>
        <dbReference type="ChEBI" id="CHEBI:29035"/>
    </cofactor>
    <text evidence="1">The manganese ion interacts primarily with the substrate UDP-N-acetylglucosamine.</text>
</comment>
<comment type="pathway">
    <text evidence="1">Protein modification; protein glycosylation.</text>
</comment>
<comment type="subunit">
    <text evidence="1">Interacts with DAG1 (via O-linked mannose moiety). Interacts (via transmembrane domain) with FKTN; the interaction is direct and is required for normal location in Golgi membranes.</text>
</comment>
<comment type="subcellular location">
    <subcellularLocation>
        <location evidence="1">Golgi apparatus membrane</location>
        <topology evidence="1">Single-pass type II membrane protein</topology>
    </subcellularLocation>
</comment>
<comment type="alternative products">
    <event type="alternative splicing"/>
    <isoform>
        <id>Q91X88-1</id>
        <name>1</name>
        <sequence type="displayed"/>
    </isoform>
    <isoform>
        <id>Q91X88-2</id>
        <name>2</name>
        <sequence type="described" ref="VSP_014972 VSP_014973"/>
    </isoform>
    <isoform>
        <id>Q91X88-3</id>
        <name>3</name>
        <sequence type="described" ref="VSP_014974"/>
    </isoform>
</comment>
<comment type="tissue specificity">
    <text evidence="6">Expressed at basal body and daughter centriole of photoreceptor cells (at protein level).</text>
</comment>
<comment type="developmental stage">
    <text evidence="5">Broadly expressed in late embryonic and early postnatal cerebellar neurons, including premigratory granule neurons of the external granule cell layer. Expression is maintained in neurons of the internal granule cell layer after migration is complete. Expressed in Purkinje cells throughout development. Expressed in Bergmann glial scaffolds used by granule cells during early posnatal radial migration.</text>
</comment>
<comment type="domain">
    <text evidence="1">The GG-type lectin domain is known as the stem domain in POMGnT1. It mediates specific interaction with beta-linked N-acetylglucosamine moieties of O-glycosylated proteins. It also interacts with its product, N-acetyl-beta-D-glucosaminyl-(1-&gt;2)-O-alpha-D-mannosylprotein.</text>
</comment>
<comment type="similarity">
    <text evidence="8">Belongs to the glycosyltransferase 13 family.</text>
</comment>
<comment type="online information" name="Functional Glycomics Gateway - GTase">
    <link uri="http://www.functionalglycomics.org/glycomics/molecule/jsp/glycoEnzyme/viewGlycoEnzyme.jsp?gbpId=gt_mou_594"/>
    <text>POMGnT1</text>
</comment>
<name>PMGT1_MOUSE</name>
<organism>
    <name type="scientific">Mus musculus</name>
    <name type="common">Mouse</name>
    <dbReference type="NCBI Taxonomy" id="10090"/>
    <lineage>
        <taxon>Eukaryota</taxon>
        <taxon>Metazoa</taxon>
        <taxon>Chordata</taxon>
        <taxon>Craniata</taxon>
        <taxon>Vertebrata</taxon>
        <taxon>Euteleostomi</taxon>
        <taxon>Mammalia</taxon>
        <taxon>Eutheria</taxon>
        <taxon>Euarchontoglires</taxon>
        <taxon>Glires</taxon>
        <taxon>Rodentia</taxon>
        <taxon>Myomorpha</taxon>
        <taxon>Muroidea</taxon>
        <taxon>Muridae</taxon>
        <taxon>Murinae</taxon>
        <taxon>Mus</taxon>
        <taxon>Mus</taxon>
    </lineage>
</organism>
<accession>Q91X88</accession>
<accession>A2A8F8</accession>
<accession>Q9D2H7</accession>
<accession>Q9D5D3</accession>
<accession>Q9DCN3</accession>
<gene>
    <name type="primary">Pomgnt1</name>
</gene>